<evidence type="ECO:0000255" key="1">
    <source>
        <dbReference type="HAMAP-Rule" id="MF_01817"/>
    </source>
</evidence>
<evidence type="ECO:0000255" key="2">
    <source>
        <dbReference type="PROSITE-ProRule" id="PRU01246"/>
    </source>
</evidence>
<evidence type="ECO:0000255" key="3">
    <source>
        <dbReference type="PROSITE-ProRule" id="PRU01248"/>
    </source>
</evidence>
<feature type="chain" id="PRO_1000187924" description="Tyrosine recombinase XerD-like">
    <location>
        <begin position="1"/>
        <end position="248"/>
    </location>
</feature>
<feature type="domain" description="Core-binding (CB)" evidence="3">
    <location>
        <begin position="1"/>
        <end position="72"/>
    </location>
</feature>
<feature type="domain" description="Tyr recombinase" evidence="2">
    <location>
        <begin position="85"/>
        <end position="248"/>
    </location>
</feature>
<feature type="active site" evidence="2">
    <location>
        <position position="149"/>
    </location>
</feature>
<feature type="active site" evidence="2">
    <location>
        <position position="213"/>
    </location>
</feature>
<feature type="active site" description="O-(3'-phospho-DNA)-tyrosine intermediate" evidence="2">
    <location>
        <position position="245"/>
    </location>
</feature>
<proteinExistence type="inferred from homology"/>
<reference key="1">
    <citation type="journal article" date="2008" name="J. Bacteriol.">
        <title>Genome sequence of a nephritogenic and highly transformable M49 strain of Streptococcus pyogenes.</title>
        <authorList>
            <person name="McShan W.M."/>
            <person name="Ferretti J.J."/>
            <person name="Karasawa T."/>
            <person name="Suvorov A.N."/>
            <person name="Lin S."/>
            <person name="Qin B."/>
            <person name="Jia H."/>
            <person name="Kenton S."/>
            <person name="Najar F."/>
            <person name="Wu H."/>
            <person name="Scott J."/>
            <person name="Roe B.A."/>
            <person name="Savic D.J."/>
        </authorList>
    </citation>
    <scope>NUCLEOTIDE SEQUENCE [LARGE SCALE GENOMIC DNA]</scope>
    <source>
        <strain>NZ131</strain>
    </source>
</reference>
<comment type="function">
    <text evidence="1">Putative tyrosine recombinase. Not involved in the cutting and rejoining of the recombining DNA molecules on dif(SL) site.</text>
</comment>
<comment type="subcellular location">
    <subcellularLocation>
        <location evidence="1">Cytoplasm</location>
    </subcellularLocation>
</comment>
<comment type="similarity">
    <text evidence="1">Belongs to the 'phage' integrase family. XerD-like subfamily.</text>
</comment>
<organism>
    <name type="scientific">Streptococcus pyogenes serotype M49 (strain NZ131)</name>
    <dbReference type="NCBI Taxonomy" id="471876"/>
    <lineage>
        <taxon>Bacteria</taxon>
        <taxon>Bacillati</taxon>
        <taxon>Bacillota</taxon>
        <taxon>Bacilli</taxon>
        <taxon>Lactobacillales</taxon>
        <taxon>Streptococcaceae</taxon>
        <taxon>Streptococcus</taxon>
    </lineage>
</organism>
<gene>
    <name type="ordered locus">Spy49_0301</name>
</gene>
<keyword id="KW-0963">Cytoplasm</keyword>
<keyword id="KW-0229">DNA integration</keyword>
<keyword id="KW-0233">DNA recombination</keyword>
<keyword id="KW-0238">DNA-binding</keyword>
<protein>
    <recommendedName>
        <fullName evidence="1">Tyrosine recombinase XerD-like</fullName>
    </recommendedName>
</protein>
<sequence length="248" mass="28817">MKSYIEPFIASKALSQNSQKAYRYDLQQFCQLVGERVNQDKLLLYQNSIANLSLSAKKRKLSTANQFLYYLYQIKYLNSYFRLTDTMKVMRTEKQQAAIINTDIFYQKTPFVWGQLISLLILELGLTPSEVAGIEVANLDLNFQMLTLKTKKGVRVLPLSQILIPFLEQQLVGKEVYLFEHRGIPFSRQWFFNHLKTFVRSIGYEGLTAQKLREQFILKEKLAGKSIIELSDILGLKSPVTLEKYYKS</sequence>
<dbReference type="EMBL" id="CP000829">
    <property type="protein sequence ID" value="ACI60639.1"/>
    <property type="molecule type" value="Genomic_DNA"/>
</dbReference>
<dbReference type="SMR" id="B5XJX7"/>
<dbReference type="KEGG" id="soz:Spy49_0301"/>
<dbReference type="HOGENOM" id="CLU_1128554_0_0_9"/>
<dbReference type="Proteomes" id="UP000001039">
    <property type="component" value="Chromosome"/>
</dbReference>
<dbReference type="GO" id="GO:0005737">
    <property type="term" value="C:cytoplasm"/>
    <property type="evidence" value="ECO:0007669"/>
    <property type="project" value="UniProtKB-SubCell"/>
</dbReference>
<dbReference type="GO" id="GO:0003677">
    <property type="term" value="F:DNA binding"/>
    <property type="evidence" value="ECO:0007669"/>
    <property type="project" value="UniProtKB-KW"/>
</dbReference>
<dbReference type="GO" id="GO:0009037">
    <property type="term" value="F:tyrosine-based site-specific recombinase activity"/>
    <property type="evidence" value="ECO:0007669"/>
    <property type="project" value="UniProtKB-UniRule"/>
</dbReference>
<dbReference type="GO" id="GO:0006313">
    <property type="term" value="P:DNA transposition"/>
    <property type="evidence" value="ECO:0007669"/>
    <property type="project" value="UniProtKB-UniRule"/>
</dbReference>
<dbReference type="CDD" id="cd01190">
    <property type="entry name" value="INT_StrepXerD_C_like"/>
    <property type="match status" value="1"/>
</dbReference>
<dbReference type="Gene3D" id="1.10.150.130">
    <property type="match status" value="1"/>
</dbReference>
<dbReference type="Gene3D" id="1.10.443.10">
    <property type="entry name" value="Intergrase catalytic core"/>
    <property type="match status" value="1"/>
</dbReference>
<dbReference type="HAMAP" id="MF_01817">
    <property type="entry name" value="Recomb_XerD_like"/>
    <property type="match status" value="1"/>
</dbReference>
<dbReference type="InterPro" id="IPR044068">
    <property type="entry name" value="CB"/>
</dbReference>
<dbReference type="InterPro" id="IPR011010">
    <property type="entry name" value="DNA_brk_join_enz"/>
</dbReference>
<dbReference type="InterPro" id="IPR013762">
    <property type="entry name" value="Integrase-like_cat_sf"/>
</dbReference>
<dbReference type="InterPro" id="IPR002104">
    <property type="entry name" value="Integrase_catalytic"/>
</dbReference>
<dbReference type="InterPro" id="IPR010998">
    <property type="entry name" value="Integrase_recombinase_N"/>
</dbReference>
<dbReference type="InterPro" id="IPR020876">
    <property type="entry name" value="Tyrosine_recombinase_XerD-like"/>
</dbReference>
<dbReference type="NCBIfam" id="NF002685">
    <property type="entry name" value="PRK02436.1"/>
    <property type="match status" value="1"/>
</dbReference>
<dbReference type="SUPFAM" id="SSF56349">
    <property type="entry name" value="DNA breaking-rejoining enzymes"/>
    <property type="match status" value="1"/>
</dbReference>
<dbReference type="PROSITE" id="PS51900">
    <property type="entry name" value="CB"/>
    <property type="match status" value="1"/>
</dbReference>
<dbReference type="PROSITE" id="PS51898">
    <property type="entry name" value="TYR_RECOMBINASE"/>
    <property type="match status" value="1"/>
</dbReference>
<name>XERDL_STRPZ</name>
<accession>B5XJX7</accession>